<sequence>MGLQMTAARPIAALSLLVLSLLTWTHPTIVDAAHPPEIIRKPQNQGVRVGGVASFYCAARGDPPPSIVWRKNGKKVSGTQSRYTVLEQPGGISILRIEPVRAGRDDAPYECVAENGVGDAVSADATLTIYEGDKTPAGFPVITQGPGTRVIEVGHTVLMTCKAIGNPTPNIYWIKNQTKVDMSNPRYSLKDGFLQIENSREEDQGKYECVAENSMGTEHSKATNLYVKVRRVPPTFSRPPETISEVMLGSNLNLSCIAVGSPMPHVKWMKGSEDLTPENEMPIGRNVLQLINIQESANYTCIAASTLGQIDSVSVVKVQSLPTAPTDVQISEVTATSVRLEWSYKGPEDLQYYVIQYKPKNANQAFSEISGIITMYYVVRALSPYTEYEFYVIAVNNIGRGPPSAPATCTTGETKMESAPRNVQVRTLSSSTMVITWEPPETPNGQVTGYKVYYTTNSNQPEASWNSQMVDNSELTTVSELTPHAIYTVRVQAYTSMGAGPMSTPVQVKAQQGVPSQPSNFRATDIGETAVTLQWTKPTHSSENIVHYELYWNDTYANQAHHKRISNSEAYTLDGLYPDTLYYIWLAARSQRGEGATTPPIPVRTKQYVPGAPPRNITAIATSSTTISLSWLPPPVERSNGRIIYYKVFFVEVGREDDEATTMTLNMTSIVLDELKRWTEYKIWVLAGTSVGDGPRSHPIILRTQEDVPGDPQDVKATPLNSTSIHVSWKPPLEKDRNGIIRGYHIHAQELRDEGKGFLNEPFKFDVVDTLEFNVTGLQPDTKYSIQVAALTRKGDGDRSAAIVVKTPGGVPVRPTVSLKIMEREPIVSIELEWERPAQTYGELRGYRLRWGVKDQALKEEMLSGPQMTKKRFDNLERGVEYEFRVAGSNHIGIGQETVKIFQTPEGTPGGPPSNITIRFQTPDVLCVTWDPPTREHRNGIITRYDVQFHKKIDHGLGSERNMTLRKAVFTNLEENTEYIFRVRAYTKQGAGPFSDKLIVETERDMGRAPMSLQAEATSEQTAEIWWEPVTSRGKLLGYKIFYTMTAVEDLDDWQTKTVGLTESADLVNLEKFAQYAVAIAARFKNGLGRLSEKVTVRIKPEDVPLNLRAHDVSTHSMTLSWSPPIRLTPVNYKISFDAMKVFVDSQGFSQTQIVPKREIILKHYVKTHTINELSPFTTYNVNVSAIPSDYSYRPPTKITVTTQMAAPQPMVKPDFYGVVNGEEILVILPQASEEYGPISHYYLVVVPEDKSNLHKIPDQFLTDDLLPGRNKPERPNAPYIAAKFPQRSIPFTFHLGSGDDYHNFTNRKLEREKRYRIFVRAVVDTPQKHLYTSSPFSEFLSLDMREAPPGERPHRPDPNWPAEPEVSVNRNKDEPEILWVVLPLMVSTFIVSTALIVLCVVKRRRQPCKTPDQAAVTRPLMAADLGAGPTPSDPVDMRRLNFQTPGMISHPPIPISEFANHIERLKSNDNQKFSQEYESIEPGQQFTWDNSNLEHNKSKNRYANVTAYDHSRVQLPAVEGVVGSDYINANYCDGYRKHNAYVATQGPLQETFVDFWRMCWELKTATIVMMTRLEERTRIKCDQYWPTRGTETYGQIFVTITETQELATYSIRTFQLCRQGFNDRREIKQLQFTAWPDHGVPDHPAPFLQFLRRCRALTPPESGPVIVHCSAGVGRTGCYIVIDSMLERMKHEKIIDIYGHVTCLRAQRNYMVQTEDQYIFIHDAILEAIICGVTEVPARNLHTHLQKLLITEPGETISGMEVEFKKLSNVKMDSSKFVTANLPCNKHKNRLVHILPYESSRVYLTPIHGIEGSDYVNASFIDGYRYRSAYIAAQGPVQDAAEDFWRMLWEHNSTIVVMLTKLKEMGREKCFQYWPHERSVRYQYYVVDPIAEYNMPQYKLREFKVTDARDGSSRTVRQFQFIDWPEQGVPKSGEGFIDFIGQVHKTKEQFGQDGPITVHCSAGVGRSGVFITLSIVLERMQYEGVLDVFQTVRILRSQRPAMVQTEDQYHFCYRAALEYLGSFDNYTN</sequence>
<dbReference type="EC" id="3.1.3.48" evidence="11"/>
<dbReference type="EMBL" id="M27700">
    <property type="protein sequence ID" value="AAA28668.1"/>
    <property type="molecule type" value="mRNA"/>
</dbReference>
<dbReference type="EMBL" id="U36857">
    <property type="protein sequence ID" value="AAC47002.1"/>
    <property type="molecule type" value="Genomic_DNA"/>
</dbReference>
<dbReference type="EMBL" id="U36849">
    <property type="protein sequence ID" value="AAC47002.1"/>
    <property type="status" value="JOINED"/>
    <property type="molecule type" value="Genomic_DNA"/>
</dbReference>
<dbReference type="EMBL" id="U36850">
    <property type="protein sequence ID" value="AAC47002.1"/>
    <property type="status" value="JOINED"/>
    <property type="molecule type" value="Genomic_DNA"/>
</dbReference>
<dbReference type="EMBL" id="U36851">
    <property type="protein sequence ID" value="AAC47002.1"/>
    <property type="status" value="JOINED"/>
    <property type="molecule type" value="Genomic_DNA"/>
</dbReference>
<dbReference type="EMBL" id="U36852">
    <property type="protein sequence ID" value="AAC47002.1"/>
    <property type="status" value="JOINED"/>
    <property type="molecule type" value="Genomic_DNA"/>
</dbReference>
<dbReference type="EMBL" id="U36853">
    <property type="protein sequence ID" value="AAC47002.1"/>
    <property type="status" value="JOINED"/>
    <property type="molecule type" value="Genomic_DNA"/>
</dbReference>
<dbReference type="EMBL" id="U36854">
    <property type="protein sequence ID" value="AAC47002.1"/>
    <property type="status" value="JOINED"/>
    <property type="molecule type" value="Genomic_DNA"/>
</dbReference>
<dbReference type="EMBL" id="U36855">
    <property type="protein sequence ID" value="AAC47002.1"/>
    <property type="status" value="JOINED"/>
    <property type="molecule type" value="Genomic_DNA"/>
</dbReference>
<dbReference type="EMBL" id="U36856">
    <property type="protein sequence ID" value="AAC47002.1"/>
    <property type="status" value="JOINED"/>
    <property type="molecule type" value="Genomic_DNA"/>
</dbReference>
<dbReference type="EMBL" id="AE014134">
    <property type="protein sequence ID" value="AAF53837.3"/>
    <property type="molecule type" value="Genomic_DNA"/>
</dbReference>
<dbReference type="EMBL" id="AY051985">
    <property type="protein sequence ID" value="AAK93409.1"/>
    <property type="status" value="ALT_INIT"/>
    <property type="molecule type" value="mRNA"/>
</dbReference>
<dbReference type="PIR" id="A36182">
    <property type="entry name" value="TDFFLK"/>
</dbReference>
<dbReference type="RefSeq" id="NP_523604.2">
    <property type="nucleotide sequence ID" value="NM_078880.3"/>
</dbReference>
<dbReference type="PDB" id="2YD1">
    <property type="method" value="X-ray"/>
    <property type="resolution" value="1.80 A"/>
    <property type="chains" value="A=33-232"/>
</dbReference>
<dbReference type="PDB" id="3PXJ">
    <property type="method" value="X-ray"/>
    <property type="resolution" value="2.30 A"/>
    <property type="chains" value="A/B/C/D=32-237"/>
</dbReference>
<dbReference type="PDB" id="6X38">
    <property type="method" value="X-ray"/>
    <property type="resolution" value="1.30 A"/>
    <property type="chains" value="A=706-812"/>
</dbReference>
<dbReference type="PDBsum" id="2YD1"/>
<dbReference type="PDBsum" id="3PXJ"/>
<dbReference type="PDBsum" id="6X38"/>
<dbReference type="SMR" id="P16621"/>
<dbReference type="BioGRID" id="61235">
    <property type="interactions" value="22"/>
</dbReference>
<dbReference type="DIP" id="DIP-38648N"/>
<dbReference type="FunCoup" id="P16621">
    <property type="interactions" value="278"/>
</dbReference>
<dbReference type="IntAct" id="P16621">
    <property type="interactions" value="7"/>
</dbReference>
<dbReference type="MINT" id="P16621"/>
<dbReference type="STRING" id="7227.FBpp0303681"/>
<dbReference type="GlyCosmos" id="P16621">
    <property type="glycosylation" value="12 sites, No reported glycans"/>
</dbReference>
<dbReference type="GlyGen" id="P16621">
    <property type="glycosylation" value="15 sites"/>
</dbReference>
<dbReference type="iPTMnet" id="P16621"/>
<dbReference type="PaxDb" id="7227-FBpp0303681"/>
<dbReference type="EnsemblMetazoa" id="FBtr0081260">
    <property type="protein sequence ID" value="FBpp0080801"/>
    <property type="gene ID" value="FBgn0000464"/>
</dbReference>
<dbReference type="GeneID" id="35259"/>
<dbReference type="KEGG" id="dme:Dmel_CG10443"/>
<dbReference type="UCSC" id="CG10443-RA">
    <property type="organism name" value="d. melanogaster"/>
</dbReference>
<dbReference type="AGR" id="FB:FBgn0000464"/>
<dbReference type="CTD" id="104121"/>
<dbReference type="FlyBase" id="FBgn0000464">
    <property type="gene designation" value="Lar"/>
</dbReference>
<dbReference type="VEuPathDB" id="VectorBase:FBgn0000464"/>
<dbReference type="eggNOG" id="KOG2408">
    <property type="taxonomic scope" value="Eukaryota"/>
</dbReference>
<dbReference type="eggNOG" id="KOG4228">
    <property type="taxonomic scope" value="Eukaryota"/>
</dbReference>
<dbReference type="GeneTree" id="ENSGT00940000166904"/>
<dbReference type="InParanoid" id="P16621"/>
<dbReference type="OrthoDB" id="10253954at2759"/>
<dbReference type="PhylomeDB" id="P16621"/>
<dbReference type="Reactome" id="R-DME-375165">
    <property type="pathway name" value="NCAM signaling for neurite out-growth"/>
</dbReference>
<dbReference type="Reactome" id="R-DME-388844">
    <property type="pathway name" value="Receptor-type tyrosine-protein phosphatases"/>
</dbReference>
<dbReference type="Reactome" id="R-DME-416700">
    <property type="pathway name" value="Other semaphorin interactions"/>
</dbReference>
<dbReference type="Reactome" id="R-DME-5673001">
    <property type="pathway name" value="RAF/MAP kinase cascade"/>
</dbReference>
<dbReference type="Reactome" id="R-DME-6798695">
    <property type="pathway name" value="Neutrophil degranulation"/>
</dbReference>
<dbReference type="Reactome" id="R-DME-77387">
    <property type="pathway name" value="Insulin receptor recycling"/>
</dbReference>
<dbReference type="Reactome" id="R-DME-8849932">
    <property type="pathway name" value="Synaptic adhesion-like molecules"/>
</dbReference>
<dbReference type="SignaLink" id="P16621"/>
<dbReference type="BioGRID-ORCS" id="35259">
    <property type="hits" value="0 hits in 3 CRISPR screens"/>
</dbReference>
<dbReference type="EvolutionaryTrace" id="P16621"/>
<dbReference type="GenomeRNAi" id="35259"/>
<dbReference type="PRO" id="PR:P16621"/>
<dbReference type="Proteomes" id="UP000000803">
    <property type="component" value="Chromosome 2L"/>
</dbReference>
<dbReference type="Bgee" id="FBgn0000464">
    <property type="expression patterns" value="Expressed in distal medullary amacrine neuron Dm11 in insect head and 280 other cell types or tissues"/>
</dbReference>
<dbReference type="ExpressionAtlas" id="P16621">
    <property type="expression patterns" value="baseline"/>
</dbReference>
<dbReference type="GO" id="GO:0030424">
    <property type="term" value="C:axon"/>
    <property type="evidence" value="ECO:0000314"/>
    <property type="project" value="FlyBase"/>
</dbReference>
<dbReference type="GO" id="GO:0009925">
    <property type="term" value="C:basal plasma membrane"/>
    <property type="evidence" value="ECO:0000314"/>
    <property type="project" value="FlyBase"/>
</dbReference>
<dbReference type="GO" id="GO:0031252">
    <property type="term" value="C:cell leading edge"/>
    <property type="evidence" value="ECO:0000314"/>
    <property type="project" value="FlyBase"/>
</dbReference>
<dbReference type="GO" id="GO:0009986">
    <property type="term" value="C:cell surface"/>
    <property type="evidence" value="ECO:0000314"/>
    <property type="project" value="FlyBase"/>
</dbReference>
<dbReference type="GO" id="GO:0005925">
    <property type="term" value="C:focal adhesion"/>
    <property type="evidence" value="ECO:0000314"/>
    <property type="project" value="FlyBase"/>
</dbReference>
<dbReference type="GO" id="GO:0008201">
    <property type="term" value="F:heparin binding"/>
    <property type="evidence" value="ECO:0007669"/>
    <property type="project" value="UniProtKB-KW"/>
</dbReference>
<dbReference type="GO" id="GO:0005158">
    <property type="term" value="F:insulin receptor binding"/>
    <property type="evidence" value="ECO:0000353"/>
    <property type="project" value="FlyBase"/>
</dbReference>
<dbReference type="GO" id="GO:0004725">
    <property type="term" value="F:protein tyrosine phosphatase activity"/>
    <property type="evidence" value="ECO:0000314"/>
    <property type="project" value="CACAO"/>
</dbReference>
<dbReference type="GO" id="GO:0032093">
    <property type="term" value="F:SAM domain binding"/>
    <property type="evidence" value="ECO:0000353"/>
    <property type="project" value="FlyBase"/>
</dbReference>
<dbReference type="GO" id="GO:0005001">
    <property type="term" value="F:transmembrane receptor protein tyrosine phosphatase activity"/>
    <property type="evidence" value="ECO:0000314"/>
    <property type="project" value="FlyBase"/>
</dbReference>
<dbReference type="GO" id="GO:0048675">
    <property type="term" value="P:axon extension"/>
    <property type="evidence" value="ECO:0000315"/>
    <property type="project" value="FlyBase"/>
</dbReference>
<dbReference type="GO" id="GO:0007411">
    <property type="term" value="P:axon guidance"/>
    <property type="evidence" value="ECO:0000315"/>
    <property type="project" value="FlyBase"/>
</dbReference>
<dbReference type="GO" id="GO:0007412">
    <property type="term" value="P:axon target recognition"/>
    <property type="evidence" value="ECO:0000315"/>
    <property type="project" value="FlyBase"/>
</dbReference>
<dbReference type="GO" id="GO:0007155">
    <property type="term" value="P:cell adhesion"/>
    <property type="evidence" value="ECO:0007669"/>
    <property type="project" value="UniProtKB-KW"/>
</dbReference>
<dbReference type="GO" id="GO:0060269">
    <property type="term" value="P:centripetally migrating follicle cell migration"/>
    <property type="evidence" value="ECO:0000315"/>
    <property type="project" value="FlyBase"/>
</dbReference>
<dbReference type="GO" id="GO:0061484">
    <property type="term" value="P:hematopoietic stem cell homeostasis"/>
    <property type="evidence" value="ECO:0000315"/>
    <property type="project" value="FlyBase"/>
</dbReference>
<dbReference type="GO" id="GO:0008045">
    <property type="term" value="P:motor neuron axon guidance"/>
    <property type="evidence" value="ECO:0000315"/>
    <property type="project" value="FlyBase"/>
</dbReference>
<dbReference type="GO" id="GO:1903386">
    <property type="term" value="P:negative regulation of homophilic cell adhesion"/>
    <property type="evidence" value="ECO:0000316"/>
    <property type="project" value="FlyBase"/>
</dbReference>
<dbReference type="GO" id="GO:0046627">
    <property type="term" value="P:negative regulation of insulin receptor signaling pathway"/>
    <property type="evidence" value="ECO:0000315"/>
    <property type="project" value="FlyBase"/>
</dbReference>
<dbReference type="GO" id="GO:0007399">
    <property type="term" value="P:nervous system development"/>
    <property type="evidence" value="ECO:0000315"/>
    <property type="project" value="FlyBase"/>
</dbReference>
<dbReference type="GO" id="GO:0048477">
    <property type="term" value="P:oogenesis"/>
    <property type="evidence" value="ECO:0000315"/>
    <property type="project" value="FlyBase"/>
</dbReference>
<dbReference type="GO" id="GO:0008594">
    <property type="term" value="P:photoreceptor cell morphogenesis"/>
    <property type="evidence" value="ECO:0000315"/>
    <property type="project" value="FlyBase"/>
</dbReference>
<dbReference type="GO" id="GO:0051491">
    <property type="term" value="P:positive regulation of filopodium assembly"/>
    <property type="evidence" value="ECO:0000315"/>
    <property type="project" value="FlyBase"/>
</dbReference>
<dbReference type="GO" id="GO:0120034">
    <property type="term" value="P:positive regulation of plasma membrane bounded cell projection assembly"/>
    <property type="evidence" value="ECO:0000315"/>
    <property type="project" value="FlyBase"/>
</dbReference>
<dbReference type="GO" id="GO:0045467">
    <property type="term" value="P:R7 cell development"/>
    <property type="evidence" value="ECO:0000315"/>
    <property type="project" value="FlyBase"/>
</dbReference>
<dbReference type="GO" id="GO:0048841">
    <property type="term" value="P:regulation of axon extension involved in axon guidance"/>
    <property type="evidence" value="ECO:0000315"/>
    <property type="project" value="FlyBase"/>
</dbReference>
<dbReference type="GO" id="GO:0031290">
    <property type="term" value="P:retinal ganglion cell axon guidance"/>
    <property type="evidence" value="ECO:0000315"/>
    <property type="project" value="FlyBase"/>
</dbReference>
<dbReference type="GO" id="GO:0007165">
    <property type="term" value="P:signal transduction"/>
    <property type="evidence" value="ECO:0000318"/>
    <property type="project" value="GO_Central"/>
</dbReference>
<dbReference type="GO" id="GO:0007283">
    <property type="term" value="P:spermatogenesis"/>
    <property type="evidence" value="ECO:0000315"/>
    <property type="project" value="FlyBase"/>
</dbReference>
<dbReference type="GO" id="GO:0051124">
    <property type="term" value="P:synaptic assembly at neuromuscular junction"/>
    <property type="evidence" value="ECO:0000315"/>
    <property type="project" value="FlyBase"/>
</dbReference>
<dbReference type="CDD" id="cd00063">
    <property type="entry name" value="FN3"/>
    <property type="match status" value="9"/>
</dbReference>
<dbReference type="CDD" id="cd05739">
    <property type="entry name" value="IgI_3_RPTP_IIa_LAR_like"/>
    <property type="match status" value="1"/>
</dbReference>
<dbReference type="CDD" id="cd14554">
    <property type="entry name" value="R-PTP-LAR-2"/>
    <property type="match status" value="1"/>
</dbReference>
<dbReference type="CDD" id="cd14553">
    <property type="entry name" value="R-PTPc-LAR-1"/>
    <property type="match status" value="1"/>
</dbReference>
<dbReference type="FunFam" id="2.60.40.10:FF:000010">
    <property type="entry name" value="receptor-type tyrosine-protein phosphatase delta isoform X1"/>
    <property type="match status" value="1"/>
</dbReference>
<dbReference type="FunFam" id="3.90.190.10:FF:000002">
    <property type="entry name" value="receptor-type tyrosine-protein phosphatase delta isoform X2"/>
    <property type="match status" value="1"/>
</dbReference>
<dbReference type="FunFam" id="3.90.190.10:FF:000001">
    <property type="entry name" value="Receptor-type tyrosine-protein phosphatase F isoform A"/>
    <property type="match status" value="1"/>
</dbReference>
<dbReference type="FunFam" id="2.60.40.10:FF:001111">
    <property type="entry name" value="tyrosine-protein phosphatase Lar isoform X1"/>
    <property type="match status" value="1"/>
</dbReference>
<dbReference type="FunFam" id="2.60.40.10:FF:001197">
    <property type="entry name" value="tyrosine-protein phosphatase Lar isoform X1"/>
    <property type="match status" value="1"/>
</dbReference>
<dbReference type="FunFam" id="2.60.40.10:FF:001219">
    <property type="entry name" value="tyrosine-protein phosphatase Lar isoform X1"/>
    <property type="match status" value="1"/>
</dbReference>
<dbReference type="FunFam" id="2.60.40.10:FF:001274">
    <property type="entry name" value="tyrosine-protein phosphatase Lar isoform X1"/>
    <property type="match status" value="1"/>
</dbReference>
<dbReference type="FunFam" id="2.60.40.10:FF:001000">
    <property type="entry name" value="tyrosine-protein phosphatase Lar isoform X3"/>
    <property type="match status" value="1"/>
</dbReference>
<dbReference type="FunFam" id="2.60.40.10:FF:001102">
    <property type="entry name" value="tyrosine-protein phosphatase Lar isoform X3"/>
    <property type="match status" value="1"/>
</dbReference>
<dbReference type="FunFam" id="2.60.40.10:FF:001130">
    <property type="entry name" value="tyrosine-protein phosphatase Lar isoform X3"/>
    <property type="match status" value="1"/>
</dbReference>
<dbReference type="FunFam" id="2.60.40.10:FF:001015">
    <property type="entry name" value="tyrosine-protein phosphatase Lar isoform X4"/>
    <property type="match status" value="1"/>
</dbReference>
<dbReference type="FunFam" id="2.60.40.10:FF:001564">
    <property type="entry name" value="tyrosine-protein phosphatase Lar isoform X4"/>
    <property type="match status" value="1"/>
</dbReference>
<dbReference type="FunFam" id="2.60.40.10:FF:001523">
    <property type="entry name" value="Uncharacterized protein, isoform A"/>
    <property type="match status" value="1"/>
</dbReference>
<dbReference type="FunFam" id="2.60.40.10:FF:001191">
    <property type="entry name" value="Uncharacterized protein, isoform B"/>
    <property type="match status" value="1"/>
</dbReference>
<dbReference type="Gene3D" id="2.60.40.10">
    <property type="entry name" value="Immunoglobulins"/>
    <property type="match status" value="12"/>
</dbReference>
<dbReference type="Gene3D" id="3.90.190.10">
    <property type="entry name" value="Protein tyrosine phosphatase superfamily"/>
    <property type="match status" value="2"/>
</dbReference>
<dbReference type="InterPro" id="IPR003961">
    <property type="entry name" value="FN3_dom"/>
</dbReference>
<dbReference type="InterPro" id="IPR036116">
    <property type="entry name" value="FN3_sf"/>
</dbReference>
<dbReference type="InterPro" id="IPR007110">
    <property type="entry name" value="Ig-like_dom"/>
</dbReference>
<dbReference type="InterPro" id="IPR036179">
    <property type="entry name" value="Ig-like_dom_sf"/>
</dbReference>
<dbReference type="InterPro" id="IPR013783">
    <property type="entry name" value="Ig-like_fold"/>
</dbReference>
<dbReference type="InterPro" id="IPR013098">
    <property type="entry name" value="Ig_I-set"/>
</dbReference>
<dbReference type="InterPro" id="IPR003599">
    <property type="entry name" value="Ig_sub"/>
</dbReference>
<dbReference type="InterPro" id="IPR003598">
    <property type="entry name" value="Ig_sub2"/>
</dbReference>
<dbReference type="InterPro" id="IPR029021">
    <property type="entry name" value="Prot-tyrosine_phosphatase-like"/>
</dbReference>
<dbReference type="InterPro" id="IPR000242">
    <property type="entry name" value="PTP_cat"/>
</dbReference>
<dbReference type="InterPro" id="IPR050713">
    <property type="entry name" value="RTP_Phos/Ushers"/>
</dbReference>
<dbReference type="InterPro" id="IPR016130">
    <property type="entry name" value="Tyr_Pase_AS"/>
</dbReference>
<dbReference type="InterPro" id="IPR003595">
    <property type="entry name" value="Tyr_Pase_cat"/>
</dbReference>
<dbReference type="InterPro" id="IPR000387">
    <property type="entry name" value="Tyr_Pase_dom"/>
</dbReference>
<dbReference type="PANTHER" id="PTHR46957">
    <property type="entry name" value="CYTOKINE RECEPTOR"/>
    <property type="match status" value="1"/>
</dbReference>
<dbReference type="PANTHER" id="PTHR46957:SF6">
    <property type="entry name" value="PROTEIN-TYROSINE-PHOSPHATASE"/>
    <property type="match status" value="1"/>
</dbReference>
<dbReference type="Pfam" id="PF00041">
    <property type="entry name" value="fn3"/>
    <property type="match status" value="9"/>
</dbReference>
<dbReference type="Pfam" id="PF07679">
    <property type="entry name" value="I-set"/>
    <property type="match status" value="2"/>
</dbReference>
<dbReference type="Pfam" id="PF13927">
    <property type="entry name" value="Ig_3"/>
    <property type="match status" value="1"/>
</dbReference>
<dbReference type="Pfam" id="PF00102">
    <property type="entry name" value="Y_phosphatase"/>
    <property type="match status" value="2"/>
</dbReference>
<dbReference type="PRINTS" id="PR00014">
    <property type="entry name" value="FNTYPEIII"/>
</dbReference>
<dbReference type="PRINTS" id="PR00700">
    <property type="entry name" value="PRTYPHPHTASE"/>
</dbReference>
<dbReference type="SMART" id="SM00060">
    <property type="entry name" value="FN3"/>
    <property type="match status" value="9"/>
</dbReference>
<dbReference type="SMART" id="SM00409">
    <property type="entry name" value="IG"/>
    <property type="match status" value="3"/>
</dbReference>
<dbReference type="SMART" id="SM00408">
    <property type="entry name" value="IGc2"/>
    <property type="match status" value="3"/>
</dbReference>
<dbReference type="SMART" id="SM00194">
    <property type="entry name" value="PTPc"/>
    <property type="match status" value="2"/>
</dbReference>
<dbReference type="SMART" id="SM00404">
    <property type="entry name" value="PTPc_motif"/>
    <property type="match status" value="2"/>
</dbReference>
<dbReference type="SUPFAM" id="SSF52799">
    <property type="entry name" value="(Phosphotyrosine protein) phosphatases II"/>
    <property type="match status" value="2"/>
</dbReference>
<dbReference type="SUPFAM" id="SSF49265">
    <property type="entry name" value="Fibronectin type III"/>
    <property type="match status" value="6"/>
</dbReference>
<dbReference type="SUPFAM" id="SSF48726">
    <property type="entry name" value="Immunoglobulin"/>
    <property type="match status" value="3"/>
</dbReference>
<dbReference type="PROSITE" id="PS50853">
    <property type="entry name" value="FN3"/>
    <property type="match status" value="9"/>
</dbReference>
<dbReference type="PROSITE" id="PS50835">
    <property type="entry name" value="IG_LIKE"/>
    <property type="match status" value="3"/>
</dbReference>
<dbReference type="PROSITE" id="PS00383">
    <property type="entry name" value="TYR_PHOSPHATASE_1"/>
    <property type="match status" value="2"/>
</dbReference>
<dbReference type="PROSITE" id="PS50056">
    <property type="entry name" value="TYR_PHOSPHATASE_2"/>
    <property type="match status" value="2"/>
</dbReference>
<dbReference type="PROSITE" id="PS50055">
    <property type="entry name" value="TYR_PHOSPHATASE_PTP"/>
    <property type="match status" value="2"/>
</dbReference>
<accession>P16621</accession>
<accession>Q960M3</accession>
<accession>Q9VIS8</accession>
<reference key="1">
    <citation type="journal article" date="1989" name="Proc. Natl. Acad. Sci. U.S.A.">
        <title>A family of receptor-linked protein tyrosine phosphatases in humans and Drosophila.</title>
        <authorList>
            <person name="Streuli M."/>
            <person name="Krueger N.X."/>
            <person name="Tsai A.Y.M."/>
            <person name="Saito H."/>
        </authorList>
    </citation>
    <scope>NUCLEOTIDE SEQUENCE [MRNA]</scope>
    <scope>FUNCTION</scope>
    <scope>CATALYTIC ACTIVITY</scope>
</reference>
<reference key="2">
    <citation type="journal article" date="1996" name="Cell">
        <title>The transmembrane tyrosine phosphatase DLAR controls motor axon guidance in Drosophila.</title>
        <authorList>
            <person name="Krueger N.X."/>
            <person name="van Vactor D."/>
            <person name="Wan H.I."/>
            <person name="Gelbart W.M."/>
            <person name="Goodman C.S."/>
            <person name="Saito H."/>
        </authorList>
    </citation>
    <scope>NUCLEOTIDE SEQUENCE [GENOMIC DNA]</scope>
    <scope>FUNCTION</scope>
    <scope>TISSUE SPECIFICITY</scope>
    <source>
        <strain>Canton-S</strain>
    </source>
</reference>
<reference key="3">
    <citation type="journal article" date="2000" name="Science">
        <title>The genome sequence of Drosophila melanogaster.</title>
        <authorList>
            <person name="Adams M.D."/>
            <person name="Celniker S.E."/>
            <person name="Holt R.A."/>
            <person name="Evans C.A."/>
            <person name="Gocayne J.D."/>
            <person name="Amanatides P.G."/>
            <person name="Scherer S.E."/>
            <person name="Li P.W."/>
            <person name="Hoskins R.A."/>
            <person name="Galle R.F."/>
            <person name="George R.A."/>
            <person name="Lewis S.E."/>
            <person name="Richards S."/>
            <person name="Ashburner M."/>
            <person name="Henderson S.N."/>
            <person name="Sutton G.G."/>
            <person name="Wortman J.R."/>
            <person name="Yandell M.D."/>
            <person name="Zhang Q."/>
            <person name="Chen L.X."/>
            <person name="Brandon R.C."/>
            <person name="Rogers Y.-H.C."/>
            <person name="Blazej R.G."/>
            <person name="Champe M."/>
            <person name="Pfeiffer B.D."/>
            <person name="Wan K.H."/>
            <person name="Doyle C."/>
            <person name="Baxter E.G."/>
            <person name="Helt G."/>
            <person name="Nelson C.R."/>
            <person name="Miklos G.L.G."/>
            <person name="Abril J.F."/>
            <person name="Agbayani A."/>
            <person name="An H.-J."/>
            <person name="Andrews-Pfannkoch C."/>
            <person name="Baldwin D."/>
            <person name="Ballew R.M."/>
            <person name="Basu A."/>
            <person name="Baxendale J."/>
            <person name="Bayraktaroglu L."/>
            <person name="Beasley E.M."/>
            <person name="Beeson K.Y."/>
            <person name="Benos P.V."/>
            <person name="Berman B.P."/>
            <person name="Bhandari D."/>
            <person name="Bolshakov S."/>
            <person name="Borkova D."/>
            <person name="Botchan M.R."/>
            <person name="Bouck J."/>
            <person name="Brokstein P."/>
            <person name="Brottier P."/>
            <person name="Burtis K.C."/>
            <person name="Busam D.A."/>
            <person name="Butler H."/>
            <person name="Cadieu E."/>
            <person name="Center A."/>
            <person name="Chandra I."/>
            <person name="Cherry J.M."/>
            <person name="Cawley S."/>
            <person name="Dahlke C."/>
            <person name="Davenport L.B."/>
            <person name="Davies P."/>
            <person name="de Pablos B."/>
            <person name="Delcher A."/>
            <person name="Deng Z."/>
            <person name="Mays A.D."/>
            <person name="Dew I."/>
            <person name="Dietz S.M."/>
            <person name="Dodson K."/>
            <person name="Doup L.E."/>
            <person name="Downes M."/>
            <person name="Dugan-Rocha S."/>
            <person name="Dunkov B.C."/>
            <person name="Dunn P."/>
            <person name="Durbin K.J."/>
            <person name="Evangelista C.C."/>
            <person name="Ferraz C."/>
            <person name="Ferriera S."/>
            <person name="Fleischmann W."/>
            <person name="Fosler C."/>
            <person name="Gabrielian A.E."/>
            <person name="Garg N.S."/>
            <person name="Gelbart W.M."/>
            <person name="Glasser K."/>
            <person name="Glodek A."/>
            <person name="Gong F."/>
            <person name="Gorrell J.H."/>
            <person name="Gu Z."/>
            <person name="Guan P."/>
            <person name="Harris M."/>
            <person name="Harris N.L."/>
            <person name="Harvey D.A."/>
            <person name="Heiman T.J."/>
            <person name="Hernandez J.R."/>
            <person name="Houck J."/>
            <person name="Hostin D."/>
            <person name="Houston K.A."/>
            <person name="Howland T.J."/>
            <person name="Wei M.-H."/>
            <person name="Ibegwam C."/>
            <person name="Jalali M."/>
            <person name="Kalush F."/>
            <person name="Karpen G.H."/>
            <person name="Ke Z."/>
            <person name="Kennison J.A."/>
            <person name="Ketchum K.A."/>
            <person name="Kimmel B.E."/>
            <person name="Kodira C.D."/>
            <person name="Kraft C.L."/>
            <person name="Kravitz S."/>
            <person name="Kulp D."/>
            <person name="Lai Z."/>
            <person name="Lasko P."/>
            <person name="Lei Y."/>
            <person name="Levitsky A.A."/>
            <person name="Li J.H."/>
            <person name="Li Z."/>
            <person name="Liang Y."/>
            <person name="Lin X."/>
            <person name="Liu X."/>
            <person name="Mattei B."/>
            <person name="McIntosh T.C."/>
            <person name="McLeod M.P."/>
            <person name="McPherson D."/>
            <person name="Merkulov G."/>
            <person name="Milshina N.V."/>
            <person name="Mobarry C."/>
            <person name="Morris J."/>
            <person name="Moshrefi A."/>
            <person name="Mount S.M."/>
            <person name="Moy M."/>
            <person name="Murphy B."/>
            <person name="Murphy L."/>
            <person name="Muzny D.M."/>
            <person name="Nelson D.L."/>
            <person name="Nelson D.R."/>
            <person name="Nelson K.A."/>
            <person name="Nixon K."/>
            <person name="Nusskern D.R."/>
            <person name="Pacleb J.M."/>
            <person name="Palazzolo M."/>
            <person name="Pittman G.S."/>
            <person name="Pan S."/>
            <person name="Pollard J."/>
            <person name="Puri V."/>
            <person name="Reese M.G."/>
            <person name="Reinert K."/>
            <person name="Remington K."/>
            <person name="Saunders R.D.C."/>
            <person name="Scheeler F."/>
            <person name="Shen H."/>
            <person name="Shue B.C."/>
            <person name="Siden-Kiamos I."/>
            <person name="Simpson M."/>
            <person name="Skupski M.P."/>
            <person name="Smith T.J."/>
            <person name="Spier E."/>
            <person name="Spradling A.C."/>
            <person name="Stapleton M."/>
            <person name="Strong R."/>
            <person name="Sun E."/>
            <person name="Svirskas R."/>
            <person name="Tector C."/>
            <person name="Turner R."/>
            <person name="Venter E."/>
            <person name="Wang A.H."/>
            <person name="Wang X."/>
            <person name="Wang Z.-Y."/>
            <person name="Wassarman D.A."/>
            <person name="Weinstock G.M."/>
            <person name="Weissenbach J."/>
            <person name="Williams S.M."/>
            <person name="Woodage T."/>
            <person name="Worley K.C."/>
            <person name="Wu D."/>
            <person name="Yang S."/>
            <person name="Yao Q.A."/>
            <person name="Ye J."/>
            <person name="Yeh R.-F."/>
            <person name="Zaveri J.S."/>
            <person name="Zhan M."/>
            <person name="Zhang G."/>
            <person name="Zhao Q."/>
            <person name="Zheng L."/>
            <person name="Zheng X.H."/>
            <person name="Zhong F.N."/>
            <person name="Zhong W."/>
            <person name="Zhou X."/>
            <person name="Zhu S.C."/>
            <person name="Zhu X."/>
            <person name="Smith H.O."/>
            <person name="Gibbs R.A."/>
            <person name="Myers E.W."/>
            <person name="Rubin G.M."/>
            <person name="Venter J.C."/>
        </authorList>
    </citation>
    <scope>NUCLEOTIDE SEQUENCE [LARGE SCALE GENOMIC DNA]</scope>
    <source>
        <strain>Berkeley</strain>
    </source>
</reference>
<reference key="4">
    <citation type="journal article" date="2002" name="Genome Biol.">
        <title>Annotation of the Drosophila melanogaster euchromatic genome: a systematic review.</title>
        <authorList>
            <person name="Misra S."/>
            <person name="Crosby M.A."/>
            <person name="Mungall C.J."/>
            <person name="Matthews B.B."/>
            <person name="Campbell K.S."/>
            <person name="Hradecky P."/>
            <person name="Huang Y."/>
            <person name="Kaminker J.S."/>
            <person name="Millburn G.H."/>
            <person name="Prochnik S.E."/>
            <person name="Smith C.D."/>
            <person name="Tupy J.L."/>
            <person name="Whitfield E.J."/>
            <person name="Bayraktaroglu L."/>
            <person name="Berman B.P."/>
            <person name="Bettencourt B.R."/>
            <person name="Celniker S.E."/>
            <person name="de Grey A.D.N.J."/>
            <person name="Drysdale R.A."/>
            <person name="Harris N.L."/>
            <person name="Richter J."/>
            <person name="Russo S."/>
            <person name="Schroeder A.J."/>
            <person name="Shu S.Q."/>
            <person name="Stapleton M."/>
            <person name="Yamada C."/>
            <person name="Ashburner M."/>
            <person name="Gelbart W.M."/>
            <person name="Rubin G.M."/>
            <person name="Lewis S.E."/>
        </authorList>
    </citation>
    <scope>GENOME REANNOTATION</scope>
    <source>
        <strain>Berkeley</strain>
    </source>
</reference>
<reference key="5">
    <citation type="journal article" date="2002" name="Genome Biol.">
        <title>A Drosophila full-length cDNA resource.</title>
        <authorList>
            <person name="Stapleton M."/>
            <person name="Carlson J.W."/>
            <person name="Brokstein P."/>
            <person name="Yu C."/>
            <person name="Champe M."/>
            <person name="George R.A."/>
            <person name="Guarin H."/>
            <person name="Kronmiller B."/>
            <person name="Pacleb J.M."/>
            <person name="Park S."/>
            <person name="Wan K.H."/>
            <person name="Rubin G.M."/>
            <person name="Celniker S.E."/>
        </authorList>
    </citation>
    <scope>NUCLEOTIDE SEQUENCE [LARGE SCALE MRNA] OF 428-2029</scope>
    <source>
        <strain>Berkeley</strain>
        <tissue>Embryo</tissue>
    </source>
</reference>
<reference key="6">
    <citation type="journal article" date="2008" name="J. Proteome Res.">
        <title>Phosphoproteome analysis of Drosophila melanogaster embryos.</title>
        <authorList>
            <person name="Zhai B."/>
            <person name="Villen J."/>
            <person name="Beausoleil S.A."/>
            <person name="Mintseris J."/>
            <person name="Gygi S.P."/>
        </authorList>
    </citation>
    <scope>PHOSPHORYLATION [LARGE SCALE ANALYSIS] AT THR-1572</scope>
    <scope>IDENTIFICATION BY MASS SPECTROMETRY</scope>
    <source>
        <tissue>Embryo</tissue>
    </source>
</reference>
<reference key="7">
    <citation type="journal article" date="2013" name="J. Neurosci.">
        <title>Visual circuit assembly requires fine tuning of the novel Ig transmembrane protein Borderless.</title>
        <authorList>
            <person name="Cameron S."/>
            <person name="Chang W.T."/>
            <person name="Chen Y."/>
            <person name="Zhou Y."/>
            <person name="Taran S."/>
            <person name="Rao Y."/>
        </authorList>
    </citation>
    <scope>FUNCTION</scope>
    <scope>DOMAIN</scope>
    <scope>DISRUPTION PHENOTYPE</scope>
</reference>
<reference key="8">
    <citation type="journal article" date="2011" name="J. Mol. Biol.">
        <title>The immunoglobulin-like domains 1 and 2 of the protein tyrosine phosphatase LAR adopt an unusual horseshoe-like conformation.</title>
        <authorList>
            <person name="Biersmith B.H."/>
            <person name="Hammel M."/>
            <person name="Geisbrecht E.R."/>
            <person name="Bouyain S."/>
        </authorList>
    </citation>
    <scope>X-RAY CRYSTALLOGRAPHY (2.3 ANGSTROMS) OF 32-237</scope>
    <scope>HEPARIN-BINDING REGION</scope>
    <scope>DISULFIDE BONDS</scope>
</reference>
<name>LAR_DROME</name>
<gene>
    <name type="primary">Lar</name>
    <name type="ORF">CG10443</name>
</gene>
<keyword id="KW-0002">3D-structure</keyword>
<keyword id="KW-0130">Cell adhesion</keyword>
<keyword id="KW-1015">Disulfide bond</keyword>
<keyword id="KW-0325">Glycoprotein</keyword>
<keyword id="KW-0358">Heparin-binding</keyword>
<keyword id="KW-0378">Hydrolase</keyword>
<keyword id="KW-0393">Immunoglobulin domain</keyword>
<keyword id="KW-0472">Membrane</keyword>
<keyword id="KW-0524">Neurogenesis</keyword>
<keyword id="KW-0597">Phosphoprotein</keyword>
<keyword id="KW-0904">Protein phosphatase</keyword>
<keyword id="KW-0675">Receptor</keyword>
<keyword id="KW-1185">Reference proteome</keyword>
<keyword id="KW-0677">Repeat</keyword>
<keyword id="KW-0732">Signal</keyword>
<keyword id="KW-0812">Transmembrane</keyword>
<keyword id="KW-1133">Transmembrane helix</keyword>
<evidence type="ECO:0000250" key="1"/>
<evidence type="ECO:0000255" key="2"/>
<evidence type="ECO:0000255" key="3">
    <source>
        <dbReference type="PROSITE-ProRule" id="PRU00114"/>
    </source>
</evidence>
<evidence type="ECO:0000255" key="4">
    <source>
        <dbReference type="PROSITE-ProRule" id="PRU00160"/>
    </source>
</evidence>
<evidence type="ECO:0000255" key="5">
    <source>
        <dbReference type="PROSITE-ProRule" id="PRU00316"/>
    </source>
</evidence>
<evidence type="ECO:0000255" key="6">
    <source>
        <dbReference type="PROSITE-ProRule" id="PRU10044"/>
    </source>
</evidence>
<evidence type="ECO:0000256" key="7">
    <source>
        <dbReference type="SAM" id="MobiDB-lite"/>
    </source>
</evidence>
<evidence type="ECO:0000269" key="8">
    <source>
    </source>
</evidence>
<evidence type="ECO:0000269" key="9">
    <source>
    </source>
</evidence>
<evidence type="ECO:0000269" key="10">
    <source>
    </source>
</evidence>
<evidence type="ECO:0000269" key="11">
    <source>
    </source>
</evidence>
<evidence type="ECO:0000269" key="12">
    <source>
    </source>
</evidence>
<evidence type="ECO:0000305" key="13"/>
<evidence type="ECO:0007829" key="14">
    <source>
        <dbReference type="PDB" id="2YD1"/>
    </source>
</evidence>
<evidence type="ECO:0007829" key="15">
    <source>
        <dbReference type="PDB" id="6X38"/>
    </source>
</evidence>
<organism>
    <name type="scientific">Drosophila melanogaster</name>
    <name type="common">Fruit fly</name>
    <dbReference type="NCBI Taxonomy" id="7227"/>
    <lineage>
        <taxon>Eukaryota</taxon>
        <taxon>Metazoa</taxon>
        <taxon>Ecdysozoa</taxon>
        <taxon>Arthropoda</taxon>
        <taxon>Hexapoda</taxon>
        <taxon>Insecta</taxon>
        <taxon>Pterygota</taxon>
        <taxon>Neoptera</taxon>
        <taxon>Endopterygota</taxon>
        <taxon>Diptera</taxon>
        <taxon>Brachycera</taxon>
        <taxon>Muscomorpha</taxon>
        <taxon>Ephydroidea</taxon>
        <taxon>Drosophilidae</taxon>
        <taxon>Drosophila</taxon>
        <taxon>Sophophora</taxon>
    </lineage>
</organism>
<comment type="function">
    <text evidence="10 11 12 13">Possible cell adhesion receptor (Probable). It possesses an intrinsic protein tyrosine phosphatase activity (PTPase) (PubMed:2554325). It controls motor axon guidance (PubMed:8598047). In the developing eye, has a role in normal axonal targeting of the R7 photoreceptor, where it negatively regulates bdl (PubMed:24174674). Inhibits bdl cell adhesion activity in vitro; this effect is independent of its PTPase function (PubMed:24174674).</text>
</comment>
<comment type="catalytic activity">
    <reaction evidence="6 11">
        <text>O-phospho-L-tyrosyl-[protein] + H2O = L-tyrosyl-[protein] + phosphate</text>
        <dbReference type="Rhea" id="RHEA:10684"/>
        <dbReference type="Rhea" id="RHEA-COMP:10136"/>
        <dbReference type="Rhea" id="RHEA-COMP:20101"/>
        <dbReference type="ChEBI" id="CHEBI:15377"/>
        <dbReference type="ChEBI" id="CHEBI:43474"/>
        <dbReference type="ChEBI" id="CHEBI:46858"/>
        <dbReference type="ChEBI" id="CHEBI:61978"/>
        <dbReference type="EC" id="3.1.3.48"/>
    </reaction>
</comment>
<comment type="interaction">
    <interactant intactId="EBI-668630">
        <id>P16621</id>
    </interactant>
    <interactant intactId="EBI-534090">
        <id>P00522</id>
        <label>Abl</label>
    </interactant>
    <organismsDiffer>false</organismsDiffer>
    <experiments>4</experiments>
</comment>
<comment type="interaction">
    <interactant intactId="EBI-668630">
        <id>P16621</id>
    </interactant>
    <interactant intactId="EBI-466810">
        <id>Q8T4F7</id>
        <label>ena</label>
    </interactant>
    <organismsDiffer>false</organismsDiffer>
    <experiments>2</experiments>
</comment>
<comment type="interaction">
    <interactant intactId="EBI-668630">
        <id>P16621</id>
    </interactant>
    <interactant intactId="EBI-113116">
        <id>Q9VM93</id>
        <label>Liprin-alpha</label>
    </interactant>
    <organismsDiffer>false</organismsDiffer>
    <experiments>6</experiments>
</comment>
<comment type="subcellular location">
    <subcellularLocation>
        <location>Membrane</location>
        <topology>Single-pass type I membrane protein</topology>
    </subcellularLocation>
</comment>
<comment type="tissue specificity">
    <text evidence="12">Selectively expressed in a subset of axons and pioneer neurons in the embryo.</text>
</comment>
<comment type="domain">
    <text evidence="10">The extracellular domain (1-1412) is sufficient to inhibit bdl function.</text>
</comment>
<comment type="disruption phenotype">
    <text evidence="10">In the eye, axonal targeting of the R7 photoreceptor is disrupted in approximately 80% of axons. Double knockouts of Lar and bdl partially rescue the R7 axonal targeting phenotype.</text>
</comment>
<comment type="similarity">
    <text evidence="13">Belongs to the protein-tyrosine phosphatase family. Receptor class 2A subfamily.</text>
</comment>
<comment type="sequence caution" evidence="13">
    <conflict type="erroneous initiation">
        <sequence resource="EMBL-CDS" id="AAK93409"/>
    </conflict>
</comment>
<feature type="signal peptide">
    <location>
        <begin position="1"/>
        <end position="32"/>
    </location>
</feature>
<feature type="chain" id="PRO_0000025431" description="Tyrosine-protein phosphatase Lar">
    <location>
        <begin position="33"/>
        <end position="2029"/>
    </location>
</feature>
<feature type="topological domain" description="Extracellular" evidence="2">
    <location>
        <begin position="33"/>
        <end position="1377"/>
    </location>
</feature>
<feature type="transmembrane region" description="Helical" evidence="2">
    <location>
        <begin position="1378"/>
        <end position="1402"/>
    </location>
</feature>
<feature type="topological domain" description="Cytoplasmic" evidence="2">
    <location>
        <begin position="1403"/>
        <end position="2029"/>
    </location>
</feature>
<feature type="domain" description="Ig-like C2-type 1">
    <location>
        <begin position="36"/>
        <end position="128"/>
    </location>
</feature>
<feature type="domain" description="Ig-like C2-type 2">
    <location>
        <begin position="140"/>
        <end position="224"/>
    </location>
</feature>
<feature type="domain" description="Ig-like C2-type 3">
    <location>
        <begin position="234"/>
        <end position="316"/>
    </location>
</feature>
<feature type="domain" description="Fibronectin type-III 1" evidence="5">
    <location>
        <begin position="324"/>
        <end position="414"/>
    </location>
</feature>
<feature type="domain" description="Fibronectin type-III 2" evidence="5">
    <location>
        <begin position="419"/>
        <end position="513"/>
    </location>
</feature>
<feature type="domain" description="Fibronectin type-III 3" evidence="5">
    <location>
        <begin position="517"/>
        <end position="608"/>
    </location>
</feature>
<feature type="domain" description="Fibronectin type-III 4" evidence="5">
    <location>
        <begin position="613"/>
        <end position="707"/>
    </location>
</feature>
<feature type="domain" description="Fibronectin type-III 5" evidence="5">
    <location>
        <begin position="711"/>
        <end position="810"/>
    </location>
</feature>
<feature type="domain" description="Fibronectin type-III 6" evidence="5">
    <location>
        <begin position="815"/>
        <end position="911"/>
    </location>
</feature>
<feature type="domain" description="Fibronectin type-III 7" evidence="5">
    <location>
        <begin position="912"/>
        <end position="1005"/>
    </location>
</feature>
<feature type="domain" description="Fibronectin type-III 8" evidence="5">
    <location>
        <begin position="1009"/>
        <end position="1102"/>
    </location>
</feature>
<feature type="domain" description="Fibronectin type-III 9" evidence="5">
    <location>
        <begin position="1104"/>
        <end position="1206"/>
    </location>
</feature>
<feature type="domain" description="Tyrosine-protein phosphatase 1" evidence="4">
    <location>
        <begin position="1474"/>
        <end position="1729"/>
    </location>
</feature>
<feature type="domain" description="Tyrosine-protein phosphatase 2" evidence="4">
    <location>
        <begin position="1761"/>
        <end position="2020"/>
    </location>
</feature>
<feature type="region of interest" description="Disordered" evidence="7">
    <location>
        <begin position="1346"/>
        <end position="1369"/>
    </location>
</feature>
<feature type="compositionally biased region" description="Basic and acidic residues" evidence="7">
    <location>
        <begin position="1346"/>
        <end position="1358"/>
    </location>
</feature>
<feature type="active site" description="Phosphocysteine intermediate" evidence="1">
    <location>
        <position position="1670"/>
    </location>
</feature>
<feature type="active site" description="Phosphocysteine intermediate" evidence="1">
    <location>
        <position position="1961"/>
    </location>
</feature>
<feature type="binding site">
    <location>
        <begin position="70"/>
        <end position="82"/>
    </location>
    <ligand>
        <name>heparin</name>
        <dbReference type="ChEBI" id="CHEBI:28304"/>
    </ligand>
</feature>
<feature type="binding site" evidence="1">
    <location>
        <position position="1638"/>
    </location>
    <ligand>
        <name>substrate</name>
    </ligand>
</feature>
<feature type="binding site" evidence="1">
    <location>
        <begin position="1670"/>
        <end position="1676"/>
    </location>
    <ligand>
        <name>substrate</name>
    </ligand>
</feature>
<feature type="binding site" evidence="1">
    <location>
        <position position="1714"/>
    </location>
    <ligand>
        <name>substrate</name>
    </ligand>
</feature>
<feature type="modified residue" description="Phosphothreonine" evidence="8">
    <location>
        <position position="1572"/>
    </location>
</feature>
<feature type="glycosylation site" description="N-linked (GlcNAc...) asparagine" evidence="2">
    <location>
        <position position="176"/>
    </location>
</feature>
<feature type="glycosylation site" description="N-linked (GlcNAc...) asparagine" evidence="2">
    <location>
        <position position="253"/>
    </location>
</feature>
<feature type="glycosylation site" description="N-linked (GlcNAc...) asparagine" evidence="2">
    <location>
        <position position="298"/>
    </location>
</feature>
<feature type="glycosylation site" description="N-linked (GlcNAc...) asparagine" evidence="2">
    <location>
        <position position="553"/>
    </location>
</feature>
<feature type="glycosylation site" description="N-linked (GlcNAc...) asparagine" evidence="2">
    <location>
        <position position="616"/>
    </location>
</feature>
<feature type="glycosylation site" description="N-linked (GlcNAc...) asparagine" evidence="2">
    <location>
        <position position="666"/>
    </location>
</feature>
<feature type="glycosylation site" description="N-linked (GlcNAc...) asparagine" evidence="2">
    <location>
        <position position="721"/>
    </location>
</feature>
<feature type="glycosylation site" description="N-linked (GlcNAc...) asparagine" evidence="2">
    <location>
        <position position="774"/>
    </location>
</feature>
<feature type="glycosylation site" description="N-linked (GlcNAc...) asparagine" evidence="2">
    <location>
        <position position="915"/>
    </location>
</feature>
<feature type="glycosylation site" description="N-linked (GlcNAc...) asparagine" evidence="2">
    <location>
        <position position="962"/>
    </location>
</feature>
<feature type="glycosylation site" description="N-linked (GlcNAc...) asparagine" evidence="2">
    <location>
        <position position="1183"/>
    </location>
</feature>
<feature type="glycosylation site" description="N-linked (GlcNAc...) asparagine" evidence="2">
    <location>
        <position position="1304"/>
    </location>
</feature>
<feature type="disulfide bond" evidence="3 9">
    <location>
        <begin position="57"/>
        <end position="111"/>
    </location>
</feature>
<feature type="disulfide bond" evidence="3 9">
    <location>
        <begin position="161"/>
        <end position="209"/>
    </location>
</feature>
<feature type="disulfide bond" evidence="3">
    <location>
        <begin position="256"/>
        <end position="301"/>
    </location>
</feature>
<feature type="sequence conflict" description="In Ref. 1 and 2." evidence="13" ref="1 2">
    <original>EL</original>
    <variation>DV</variation>
    <location>
        <begin position="480"/>
        <end position="481"/>
    </location>
</feature>
<feature type="strand" evidence="14">
    <location>
        <begin position="37"/>
        <end position="40"/>
    </location>
</feature>
<feature type="strand" evidence="14">
    <location>
        <begin position="45"/>
        <end position="48"/>
    </location>
</feature>
<feature type="strand" evidence="14">
    <location>
        <begin position="53"/>
        <end position="60"/>
    </location>
</feature>
<feature type="strand" evidence="14">
    <location>
        <begin position="66"/>
        <end position="71"/>
    </location>
</feature>
<feature type="strand" evidence="14">
    <location>
        <begin position="83"/>
        <end position="88"/>
    </location>
</feature>
<feature type="turn" evidence="14">
    <location>
        <begin position="89"/>
        <end position="91"/>
    </location>
</feature>
<feature type="strand" evidence="14">
    <location>
        <begin position="92"/>
        <end position="99"/>
    </location>
</feature>
<feature type="turn" evidence="14">
    <location>
        <begin position="102"/>
        <end position="104"/>
    </location>
</feature>
<feature type="strand" evidence="14">
    <location>
        <begin position="107"/>
        <end position="114"/>
    </location>
</feature>
<feature type="strand" evidence="14">
    <location>
        <begin position="116"/>
        <end position="118"/>
    </location>
</feature>
<feature type="strand" evidence="14">
    <location>
        <begin position="120"/>
        <end position="130"/>
    </location>
</feature>
<feature type="strand" evidence="14">
    <location>
        <begin position="141"/>
        <end position="144"/>
    </location>
</feature>
<feature type="strand" evidence="14">
    <location>
        <begin position="149"/>
        <end position="152"/>
    </location>
</feature>
<feature type="strand" evidence="14">
    <location>
        <begin position="157"/>
        <end position="159"/>
    </location>
</feature>
<feature type="strand" evidence="14">
    <location>
        <begin position="162"/>
        <end position="164"/>
    </location>
</feature>
<feature type="strand" evidence="14">
    <location>
        <begin position="170"/>
        <end position="175"/>
    </location>
</feature>
<feature type="strand" evidence="14">
    <location>
        <begin position="187"/>
        <end position="190"/>
    </location>
</feature>
<feature type="strand" evidence="14">
    <location>
        <begin position="193"/>
        <end position="196"/>
    </location>
</feature>
<feature type="helix" evidence="14">
    <location>
        <begin position="201"/>
        <end position="203"/>
    </location>
</feature>
<feature type="strand" evidence="14">
    <location>
        <begin position="205"/>
        <end position="213"/>
    </location>
</feature>
<feature type="strand" evidence="14">
    <location>
        <begin position="216"/>
        <end position="219"/>
    </location>
</feature>
<feature type="strand" evidence="14">
    <location>
        <begin position="223"/>
        <end position="228"/>
    </location>
</feature>
<feature type="strand" evidence="15">
    <location>
        <begin position="713"/>
        <end position="721"/>
    </location>
</feature>
<feature type="strand" evidence="15">
    <location>
        <begin position="724"/>
        <end position="730"/>
    </location>
</feature>
<feature type="strand" evidence="15">
    <location>
        <begin position="743"/>
        <end position="751"/>
    </location>
</feature>
<feature type="strand" evidence="15">
    <location>
        <begin position="763"/>
        <end position="769"/>
    </location>
</feature>
<feature type="strand" evidence="15">
    <location>
        <begin position="771"/>
        <end position="775"/>
    </location>
</feature>
<feature type="strand" evidence="15">
    <location>
        <begin position="783"/>
        <end position="792"/>
    </location>
</feature>
<feature type="strand" evidence="15">
    <location>
        <begin position="803"/>
        <end position="806"/>
    </location>
</feature>
<proteinExistence type="evidence at protein level"/>
<protein>
    <recommendedName>
        <fullName>Tyrosine-protein phosphatase Lar</fullName>
        <ecNumber evidence="11">3.1.3.48</ecNumber>
    </recommendedName>
    <alternativeName>
        <fullName>Protein-tyrosine-phosphate phosphohydrolase</fullName>
    </alternativeName>
    <alternativeName>
        <fullName>dLAR</fullName>
    </alternativeName>
</protein>